<sequence length="122" mass="13477">MIQEQTMLTVADNSGARRVMCIKVLGGSCRRYASIGDVIKITIKEAIPRGKVKKGDVLKAVIVRTKKGVRRPDGSIVRFDGNACVLLNNNEQPIGTRVFGPITRELRIEKFMKIISLAPEVL</sequence>
<evidence type="ECO:0000255" key="1">
    <source>
        <dbReference type="HAMAP-Rule" id="MF_01367"/>
    </source>
</evidence>
<evidence type="ECO:0000305" key="2"/>
<name>RL14_BAUCH</name>
<gene>
    <name evidence="1" type="primary">rplN</name>
    <name type="ordered locus">BCI_0338</name>
</gene>
<keyword id="KW-1185">Reference proteome</keyword>
<keyword id="KW-0687">Ribonucleoprotein</keyword>
<keyword id="KW-0689">Ribosomal protein</keyword>
<keyword id="KW-0694">RNA-binding</keyword>
<keyword id="KW-0699">rRNA-binding</keyword>
<proteinExistence type="inferred from homology"/>
<feature type="chain" id="PRO_0000266450" description="Large ribosomal subunit protein uL14">
    <location>
        <begin position="1"/>
        <end position="122"/>
    </location>
</feature>
<comment type="function">
    <text evidence="1">Binds to 23S rRNA. Forms part of two intersubunit bridges in the 70S ribosome.</text>
</comment>
<comment type="subunit">
    <text evidence="1">Part of the 50S ribosomal subunit. Forms a cluster with proteins L3 and L19. In the 70S ribosome, L14 and L19 interact and together make contacts with the 16S rRNA in bridges B5 and B8.</text>
</comment>
<comment type="similarity">
    <text evidence="1">Belongs to the universal ribosomal protein uL14 family.</text>
</comment>
<comment type="sequence caution" evidence="2">
    <conflict type="erroneous initiation">
        <sequence resource="EMBL-CDS" id="ABF14287"/>
    </conflict>
</comment>
<reference key="1">
    <citation type="journal article" date="2006" name="PLoS Biol.">
        <title>Metabolic complementarity and genomics of the dual bacterial symbiosis of sharpshooters.</title>
        <authorList>
            <person name="Wu D."/>
            <person name="Daugherty S.C."/>
            <person name="Van Aken S.E."/>
            <person name="Pai G.H."/>
            <person name="Watkins K.L."/>
            <person name="Khouri H."/>
            <person name="Tallon L.J."/>
            <person name="Zaborsky J.M."/>
            <person name="Dunbar H.E."/>
            <person name="Tran P.L."/>
            <person name="Moran N.A."/>
            <person name="Eisen J.A."/>
        </authorList>
    </citation>
    <scope>NUCLEOTIDE SEQUENCE [LARGE SCALE GENOMIC DNA]</scope>
</reference>
<accession>Q1LTC8</accession>
<organism>
    <name type="scientific">Baumannia cicadellinicola subsp. Homalodisca coagulata</name>
    <dbReference type="NCBI Taxonomy" id="374463"/>
    <lineage>
        <taxon>Bacteria</taxon>
        <taxon>Pseudomonadati</taxon>
        <taxon>Pseudomonadota</taxon>
        <taxon>Gammaproteobacteria</taxon>
        <taxon>Candidatus Palibaumannia</taxon>
    </lineage>
</organism>
<dbReference type="EMBL" id="CP000238">
    <property type="protein sequence ID" value="ABF14287.1"/>
    <property type="status" value="ALT_INIT"/>
    <property type="molecule type" value="Genomic_DNA"/>
</dbReference>
<dbReference type="RefSeq" id="WP_041574890.1">
    <property type="nucleotide sequence ID" value="NC_007984.1"/>
</dbReference>
<dbReference type="SMR" id="Q1LTC8"/>
<dbReference type="STRING" id="374463.BCI_0338"/>
<dbReference type="KEGG" id="bci:BCI_0338"/>
<dbReference type="HOGENOM" id="CLU_095071_2_1_6"/>
<dbReference type="OrthoDB" id="9806379at2"/>
<dbReference type="Proteomes" id="UP000002427">
    <property type="component" value="Chromosome"/>
</dbReference>
<dbReference type="GO" id="GO:0022625">
    <property type="term" value="C:cytosolic large ribosomal subunit"/>
    <property type="evidence" value="ECO:0007669"/>
    <property type="project" value="TreeGrafter"/>
</dbReference>
<dbReference type="GO" id="GO:0070180">
    <property type="term" value="F:large ribosomal subunit rRNA binding"/>
    <property type="evidence" value="ECO:0007669"/>
    <property type="project" value="TreeGrafter"/>
</dbReference>
<dbReference type="GO" id="GO:0003735">
    <property type="term" value="F:structural constituent of ribosome"/>
    <property type="evidence" value="ECO:0007669"/>
    <property type="project" value="InterPro"/>
</dbReference>
<dbReference type="GO" id="GO:0006412">
    <property type="term" value="P:translation"/>
    <property type="evidence" value="ECO:0007669"/>
    <property type="project" value="UniProtKB-UniRule"/>
</dbReference>
<dbReference type="CDD" id="cd00337">
    <property type="entry name" value="Ribosomal_uL14"/>
    <property type="match status" value="1"/>
</dbReference>
<dbReference type="FunFam" id="2.40.150.20:FF:000001">
    <property type="entry name" value="50S ribosomal protein L14"/>
    <property type="match status" value="1"/>
</dbReference>
<dbReference type="Gene3D" id="2.40.150.20">
    <property type="entry name" value="Ribosomal protein L14"/>
    <property type="match status" value="1"/>
</dbReference>
<dbReference type="HAMAP" id="MF_01367">
    <property type="entry name" value="Ribosomal_uL14"/>
    <property type="match status" value="1"/>
</dbReference>
<dbReference type="InterPro" id="IPR000218">
    <property type="entry name" value="Ribosomal_uL14"/>
</dbReference>
<dbReference type="InterPro" id="IPR005745">
    <property type="entry name" value="Ribosomal_uL14_bac-type"/>
</dbReference>
<dbReference type="InterPro" id="IPR019972">
    <property type="entry name" value="Ribosomal_uL14_CS"/>
</dbReference>
<dbReference type="InterPro" id="IPR036853">
    <property type="entry name" value="Ribosomal_uL14_sf"/>
</dbReference>
<dbReference type="NCBIfam" id="TIGR01067">
    <property type="entry name" value="rplN_bact"/>
    <property type="match status" value="1"/>
</dbReference>
<dbReference type="PANTHER" id="PTHR11761">
    <property type="entry name" value="50S/60S RIBOSOMAL PROTEIN L14/L23"/>
    <property type="match status" value="1"/>
</dbReference>
<dbReference type="PANTHER" id="PTHR11761:SF3">
    <property type="entry name" value="LARGE RIBOSOMAL SUBUNIT PROTEIN UL14M"/>
    <property type="match status" value="1"/>
</dbReference>
<dbReference type="Pfam" id="PF00238">
    <property type="entry name" value="Ribosomal_L14"/>
    <property type="match status" value="1"/>
</dbReference>
<dbReference type="SMART" id="SM01374">
    <property type="entry name" value="Ribosomal_L14"/>
    <property type="match status" value="1"/>
</dbReference>
<dbReference type="SUPFAM" id="SSF50193">
    <property type="entry name" value="Ribosomal protein L14"/>
    <property type="match status" value="1"/>
</dbReference>
<dbReference type="PROSITE" id="PS00049">
    <property type="entry name" value="RIBOSOMAL_L14"/>
    <property type="match status" value="1"/>
</dbReference>
<protein>
    <recommendedName>
        <fullName evidence="1">Large ribosomal subunit protein uL14</fullName>
    </recommendedName>
    <alternativeName>
        <fullName evidence="2">50S ribosomal protein L14</fullName>
    </alternativeName>
</protein>